<sequence length="76" mass="8801">MSRRPKIEEAMKRVESRYELVHAAVRRTLQLLREGEDFFVQEGGEVHKKTFAAIEDIAEGKVKIIKKKEESGSKEE</sequence>
<protein>
    <recommendedName>
        <fullName>DNA-directed RNA polymerase subunit omega</fullName>
        <shortName>RNAP omega subunit</shortName>
        <ecNumber>2.7.7.6</ecNumber>
    </recommendedName>
    <alternativeName>
        <fullName>RNA polymerase omega subunit</fullName>
    </alternativeName>
    <alternativeName>
        <fullName>Transcriptase subunit omega</fullName>
    </alternativeName>
</protein>
<dbReference type="EC" id="2.7.7.6"/>
<dbReference type="EMBL" id="AE000657">
    <property type="protein sequence ID" value="AAC06536.1"/>
    <property type="molecule type" value="Genomic_DNA"/>
</dbReference>
<dbReference type="PIR" id="F70317">
    <property type="entry name" value="F70317"/>
</dbReference>
<dbReference type="RefSeq" id="NP_213130.1">
    <property type="nucleotide sequence ID" value="NC_000918.1"/>
</dbReference>
<dbReference type="RefSeq" id="WP_010880068.1">
    <property type="nucleotide sequence ID" value="NC_000918.1"/>
</dbReference>
<dbReference type="SMR" id="O66570"/>
<dbReference type="STRING" id="224324.aq_183a"/>
<dbReference type="EnsemblBacteria" id="AAC06536">
    <property type="protein sequence ID" value="AAC06536"/>
    <property type="gene ID" value="aq_183a"/>
</dbReference>
<dbReference type="KEGG" id="aae:aq_183a"/>
<dbReference type="eggNOG" id="COG1758">
    <property type="taxonomic scope" value="Bacteria"/>
</dbReference>
<dbReference type="HOGENOM" id="CLU_125406_7_0_0"/>
<dbReference type="InParanoid" id="O66570"/>
<dbReference type="OrthoDB" id="15252at2"/>
<dbReference type="Proteomes" id="UP000000798">
    <property type="component" value="Chromosome"/>
</dbReference>
<dbReference type="GO" id="GO:0000345">
    <property type="term" value="C:cytosolic DNA-directed RNA polymerase complex"/>
    <property type="evidence" value="ECO:0000318"/>
    <property type="project" value="GO_Central"/>
</dbReference>
<dbReference type="GO" id="GO:0001000">
    <property type="term" value="F:bacterial-type RNA polymerase core enzyme binding"/>
    <property type="evidence" value="ECO:0000318"/>
    <property type="project" value="GO_Central"/>
</dbReference>
<dbReference type="GO" id="GO:0003677">
    <property type="term" value="F:DNA binding"/>
    <property type="evidence" value="ECO:0007669"/>
    <property type="project" value="UniProtKB-UniRule"/>
</dbReference>
<dbReference type="GO" id="GO:0003899">
    <property type="term" value="F:DNA-directed RNA polymerase activity"/>
    <property type="evidence" value="ECO:0007669"/>
    <property type="project" value="UniProtKB-UniRule"/>
</dbReference>
<dbReference type="GO" id="GO:0006352">
    <property type="term" value="P:DNA-templated transcription initiation"/>
    <property type="evidence" value="ECO:0000318"/>
    <property type="project" value="GO_Central"/>
</dbReference>
<dbReference type="Gene3D" id="3.90.940.10">
    <property type="match status" value="1"/>
</dbReference>
<dbReference type="HAMAP" id="MF_00366">
    <property type="entry name" value="RNApol_bact_RpoZ"/>
    <property type="match status" value="1"/>
</dbReference>
<dbReference type="InterPro" id="IPR003716">
    <property type="entry name" value="DNA-dir_RNA_pol_omega"/>
</dbReference>
<dbReference type="InterPro" id="IPR006110">
    <property type="entry name" value="Pol_omega/Rpo6/RPB6"/>
</dbReference>
<dbReference type="InterPro" id="IPR036161">
    <property type="entry name" value="RPB6/omega-like_sf"/>
</dbReference>
<dbReference type="NCBIfam" id="TIGR00690">
    <property type="entry name" value="rpoZ"/>
    <property type="match status" value="1"/>
</dbReference>
<dbReference type="PANTHER" id="PTHR34476">
    <property type="entry name" value="DNA-DIRECTED RNA POLYMERASE SUBUNIT OMEGA"/>
    <property type="match status" value="1"/>
</dbReference>
<dbReference type="PANTHER" id="PTHR34476:SF1">
    <property type="entry name" value="DNA-DIRECTED RNA POLYMERASE SUBUNIT OMEGA"/>
    <property type="match status" value="1"/>
</dbReference>
<dbReference type="Pfam" id="PF01192">
    <property type="entry name" value="RNA_pol_Rpb6"/>
    <property type="match status" value="1"/>
</dbReference>
<dbReference type="SMART" id="SM01409">
    <property type="entry name" value="RNA_pol_Rpb6"/>
    <property type="match status" value="1"/>
</dbReference>
<dbReference type="SUPFAM" id="SSF63562">
    <property type="entry name" value="RPB6/omega subunit-like"/>
    <property type="match status" value="1"/>
</dbReference>
<keyword id="KW-0240">DNA-directed RNA polymerase</keyword>
<keyword id="KW-0548">Nucleotidyltransferase</keyword>
<keyword id="KW-1185">Reference proteome</keyword>
<keyword id="KW-0804">Transcription</keyword>
<keyword id="KW-0808">Transferase</keyword>
<accession>O66570</accession>
<gene>
    <name type="primary">rpoZ</name>
    <name type="ordered locus">aq_183.1</name>
    <name type="ORF">aq_183A</name>
</gene>
<comment type="function">
    <text evidence="1">Promotes RNA polymerase assembly. Latches the N- and C-terminal regions of the beta' subunit thereby facilitating its interaction with the beta and alpha subunits (By similarity).</text>
</comment>
<comment type="catalytic activity">
    <reaction>
        <text>RNA(n) + a ribonucleoside 5'-triphosphate = RNA(n+1) + diphosphate</text>
        <dbReference type="Rhea" id="RHEA:21248"/>
        <dbReference type="Rhea" id="RHEA-COMP:14527"/>
        <dbReference type="Rhea" id="RHEA-COMP:17342"/>
        <dbReference type="ChEBI" id="CHEBI:33019"/>
        <dbReference type="ChEBI" id="CHEBI:61557"/>
        <dbReference type="ChEBI" id="CHEBI:140395"/>
        <dbReference type="EC" id="2.7.7.6"/>
    </reaction>
</comment>
<comment type="subunit">
    <text evidence="1">The RNAP catalytic core consists of 2 alpha, 1 beta, 1 beta' and 1 omega subunit. When a sigma factor is associated with the core the holoenzyme is formed, which can initiate transcription (By similarity).</text>
</comment>
<comment type="similarity">
    <text evidence="2">Belongs to the RNA polymerase subunit omega family.</text>
</comment>
<organism>
    <name type="scientific">Aquifex aeolicus (strain VF5)</name>
    <dbReference type="NCBI Taxonomy" id="224324"/>
    <lineage>
        <taxon>Bacteria</taxon>
        <taxon>Pseudomonadati</taxon>
        <taxon>Aquificota</taxon>
        <taxon>Aquificia</taxon>
        <taxon>Aquificales</taxon>
        <taxon>Aquificaceae</taxon>
        <taxon>Aquifex</taxon>
    </lineage>
</organism>
<evidence type="ECO:0000250" key="1"/>
<evidence type="ECO:0000305" key="2"/>
<reference key="1">
    <citation type="journal article" date="1998" name="Nature">
        <title>The complete genome of the hyperthermophilic bacterium Aquifex aeolicus.</title>
        <authorList>
            <person name="Deckert G."/>
            <person name="Warren P.V."/>
            <person name="Gaasterland T."/>
            <person name="Young W.G."/>
            <person name="Lenox A.L."/>
            <person name="Graham D.E."/>
            <person name="Overbeek R."/>
            <person name="Snead M.A."/>
            <person name="Keller M."/>
            <person name="Aujay M."/>
            <person name="Huber R."/>
            <person name="Feldman R.A."/>
            <person name="Short J.M."/>
            <person name="Olsen G.J."/>
            <person name="Swanson R.V."/>
        </authorList>
    </citation>
    <scope>NUCLEOTIDE SEQUENCE [LARGE SCALE GENOMIC DNA]</scope>
    <source>
        <strain>VF5</strain>
    </source>
</reference>
<feature type="chain" id="PRO_0000128912" description="DNA-directed RNA polymerase subunit omega">
    <location>
        <begin position="1"/>
        <end position="76"/>
    </location>
</feature>
<name>RPOZ_AQUAE</name>
<proteinExistence type="inferred from homology"/>